<name>NLTPB_ARATH</name>
<evidence type="ECO:0000250" key="1"/>
<evidence type="ECO:0000255" key="2"/>
<evidence type="ECO:0000303" key="3">
    <source ref="3"/>
</evidence>
<evidence type="ECO:0000305" key="4"/>
<reference key="1">
    <citation type="journal article" date="1999" name="Nature">
        <title>Sequence and analysis of chromosome 4 of the plant Arabidopsis thaliana.</title>
        <authorList>
            <person name="Mayer K.F.X."/>
            <person name="Schueller C."/>
            <person name="Wambutt R."/>
            <person name="Murphy G."/>
            <person name="Volckaert G."/>
            <person name="Pohl T."/>
            <person name="Duesterhoeft A."/>
            <person name="Stiekema W."/>
            <person name="Entian K.-D."/>
            <person name="Terryn N."/>
            <person name="Harris B."/>
            <person name="Ansorge W."/>
            <person name="Brandt P."/>
            <person name="Grivell L.A."/>
            <person name="Rieger M."/>
            <person name="Weichselgartner M."/>
            <person name="de Simone V."/>
            <person name="Obermaier B."/>
            <person name="Mache R."/>
            <person name="Mueller M."/>
            <person name="Kreis M."/>
            <person name="Delseny M."/>
            <person name="Puigdomenech P."/>
            <person name="Watson M."/>
            <person name="Schmidtheini T."/>
            <person name="Reichert B."/>
            <person name="Portetelle D."/>
            <person name="Perez-Alonso M."/>
            <person name="Boutry M."/>
            <person name="Bancroft I."/>
            <person name="Vos P."/>
            <person name="Hoheisel J."/>
            <person name="Zimmermann W."/>
            <person name="Wedler H."/>
            <person name="Ridley P."/>
            <person name="Langham S.-A."/>
            <person name="McCullagh B."/>
            <person name="Bilham L."/>
            <person name="Robben J."/>
            <person name="van der Schueren J."/>
            <person name="Grymonprez B."/>
            <person name="Chuang Y.-J."/>
            <person name="Vandenbussche F."/>
            <person name="Braeken M."/>
            <person name="Weltjens I."/>
            <person name="Voet M."/>
            <person name="Bastiaens I."/>
            <person name="Aert R."/>
            <person name="Defoor E."/>
            <person name="Weitzenegger T."/>
            <person name="Bothe G."/>
            <person name="Ramsperger U."/>
            <person name="Hilbert H."/>
            <person name="Braun M."/>
            <person name="Holzer E."/>
            <person name="Brandt A."/>
            <person name="Peters S."/>
            <person name="van Staveren M."/>
            <person name="Dirkse W."/>
            <person name="Mooijman P."/>
            <person name="Klein Lankhorst R."/>
            <person name="Rose M."/>
            <person name="Hauf J."/>
            <person name="Koetter P."/>
            <person name="Berneiser S."/>
            <person name="Hempel S."/>
            <person name="Feldpausch M."/>
            <person name="Lamberth S."/>
            <person name="Van den Daele H."/>
            <person name="De Keyser A."/>
            <person name="Buysshaert C."/>
            <person name="Gielen J."/>
            <person name="Villarroel R."/>
            <person name="De Clercq R."/>
            <person name="van Montagu M."/>
            <person name="Rogers J."/>
            <person name="Cronin A."/>
            <person name="Quail M.A."/>
            <person name="Bray-Allen S."/>
            <person name="Clark L."/>
            <person name="Doggett J."/>
            <person name="Hall S."/>
            <person name="Kay M."/>
            <person name="Lennard N."/>
            <person name="McLay K."/>
            <person name="Mayes R."/>
            <person name="Pettett A."/>
            <person name="Rajandream M.A."/>
            <person name="Lyne M."/>
            <person name="Benes V."/>
            <person name="Rechmann S."/>
            <person name="Borkova D."/>
            <person name="Bloecker H."/>
            <person name="Scharfe M."/>
            <person name="Grimm M."/>
            <person name="Loehnert T.-H."/>
            <person name="Dose S."/>
            <person name="de Haan M."/>
            <person name="Maarse A.C."/>
            <person name="Schaefer M."/>
            <person name="Mueller-Auer S."/>
            <person name="Gabel C."/>
            <person name="Fuchs M."/>
            <person name="Fartmann B."/>
            <person name="Granderath K."/>
            <person name="Dauner D."/>
            <person name="Herzl A."/>
            <person name="Neumann S."/>
            <person name="Argiriou A."/>
            <person name="Vitale D."/>
            <person name="Liguori R."/>
            <person name="Piravandi E."/>
            <person name="Massenet O."/>
            <person name="Quigley F."/>
            <person name="Clabauld G."/>
            <person name="Muendlein A."/>
            <person name="Felber R."/>
            <person name="Schnabl S."/>
            <person name="Hiller R."/>
            <person name="Schmidt W."/>
            <person name="Lecharny A."/>
            <person name="Aubourg S."/>
            <person name="Chefdor F."/>
            <person name="Cooke R."/>
            <person name="Berger C."/>
            <person name="Monfort A."/>
            <person name="Casacuberta E."/>
            <person name="Gibbons T."/>
            <person name="Weber N."/>
            <person name="Vandenbol M."/>
            <person name="Bargues M."/>
            <person name="Terol J."/>
            <person name="Torres A."/>
            <person name="Perez-Perez A."/>
            <person name="Purnelle B."/>
            <person name="Bent E."/>
            <person name="Johnson S."/>
            <person name="Tacon D."/>
            <person name="Jesse T."/>
            <person name="Heijnen L."/>
            <person name="Schwarz S."/>
            <person name="Scholler P."/>
            <person name="Heber S."/>
            <person name="Francs P."/>
            <person name="Bielke C."/>
            <person name="Frishman D."/>
            <person name="Haase D."/>
            <person name="Lemcke K."/>
            <person name="Mewes H.-W."/>
            <person name="Stocker S."/>
            <person name="Zaccaria P."/>
            <person name="Bevan M."/>
            <person name="Wilson R.K."/>
            <person name="de la Bastide M."/>
            <person name="Habermann K."/>
            <person name="Parnell L."/>
            <person name="Dedhia N."/>
            <person name="Gnoj L."/>
            <person name="Schutz K."/>
            <person name="Huang E."/>
            <person name="Spiegel L."/>
            <person name="Sekhon M."/>
            <person name="Murray J."/>
            <person name="Sheet P."/>
            <person name="Cordes M."/>
            <person name="Abu-Threideh J."/>
            <person name="Stoneking T."/>
            <person name="Kalicki J."/>
            <person name="Graves T."/>
            <person name="Harmon G."/>
            <person name="Edwards J."/>
            <person name="Latreille P."/>
            <person name="Courtney L."/>
            <person name="Cloud J."/>
            <person name="Abbott A."/>
            <person name="Scott K."/>
            <person name="Johnson D."/>
            <person name="Minx P."/>
            <person name="Bentley D."/>
            <person name="Fulton B."/>
            <person name="Miller N."/>
            <person name="Greco T."/>
            <person name="Kemp K."/>
            <person name="Kramer J."/>
            <person name="Fulton L."/>
            <person name="Mardis E."/>
            <person name="Dante M."/>
            <person name="Pepin K."/>
            <person name="Hillier L.W."/>
            <person name="Nelson J."/>
            <person name="Spieth J."/>
            <person name="Ryan E."/>
            <person name="Andrews S."/>
            <person name="Geisel C."/>
            <person name="Layman D."/>
            <person name="Du H."/>
            <person name="Ali J."/>
            <person name="Berghoff A."/>
            <person name="Jones K."/>
            <person name="Drone K."/>
            <person name="Cotton M."/>
            <person name="Joshu C."/>
            <person name="Antonoiu B."/>
            <person name="Zidanic M."/>
            <person name="Strong C."/>
            <person name="Sun H."/>
            <person name="Lamar B."/>
            <person name="Yordan C."/>
            <person name="Ma P."/>
            <person name="Zhong J."/>
            <person name="Preston R."/>
            <person name="Vil D."/>
            <person name="Shekher M."/>
            <person name="Matero A."/>
            <person name="Shah R."/>
            <person name="Swaby I.K."/>
            <person name="O'Shaughnessy A."/>
            <person name="Rodriguez M."/>
            <person name="Hoffman J."/>
            <person name="Till S."/>
            <person name="Granat S."/>
            <person name="Shohdy N."/>
            <person name="Hasegawa A."/>
            <person name="Hameed A."/>
            <person name="Lodhi M."/>
            <person name="Johnson A."/>
            <person name="Chen E."/>
            <person name="Marra M.A."/>
            <person name="Martienssen R."/>
            <person name="McCombie W.R."/>
        </authorList>
    </citation>
    <scope>NUCLEOTIDE SEQUENCE [LARGE SCALE GENOMIC DNA]</scope>
    <source>
        <strain>cv. Columbia</strain>
    </source>
</reference>
<reference key="2">
    <citation type="journal article" date="2017" name="Plant J.">
        <title>Araport11: a complete reannotation of the Arabidopsis thaliana reference genome.</title>
        <authorList>
            <person name="Cheng C.Y."/>
            <person name="Krishnakumar V."/>
            <person name="Chan A.P."/>
            <person name="Thibaud-Nissen F."/>
            <person name="Schobel S."/>
            <person name="Town C.D."/>
        </authorList>
    </citation>
    <scope>GENOME REANNOTATION</scope>
    <source>
        <strain>cv. Columbia</strain>
    </source>
</reference>
<reference key="3">
    <citation type="submission" date="2004-03" db="EMBL/GenBank/DDBJ databases">
        <title>Arabidopsis ORF clones.</title>
        <authorList>
            <person name="Cheuk R.F."/>
            <person name="Chen H."/>
            <person name="Kim C.J."/>
            <person name="Shinn P."/>
            <person name="Ecker J.R."/>
        </authorList>
    </citation>
    <scope>NUCLEOTIDE SEQUENCE [LARGE SCALE MRNA] (ISOFORM 2)</scope>
    <source>
        <strain>cv. Columbia</strain>
    </source>
</reference>
<reference key="4">
    <citation type="journal article" date="2004" name="Genome Res.">
        <title>Whole genome sequence comparisons and 'full-length' cDNA sequences: a combined approach to evaluate and improve Arabidopsis genome annotation.</title>
        <authorList>
            <person name="Castelli V."/>
            <person name="Aury J.-M."/>
            <person name="Jaillon O."/>
            <person name="Wincker P."/>
            <person name="Clepet C."/>
            <person name="Menard M."/>
            <person name="Cruaud C."/>
            <person name="Quetier F."/>
            <person name="Scarpelli C."/>
            <person name="Schaechter V."/>
            <person name="Temple G."/>
            <person name="Caboche M."/>
            <person name="Weissenbach J."/>
            <person name="Salanoubat M."/>
        </authorList>
    </citation>
    <scope>NUCLEOTIDE SEQUENCE [LARGE SCALE MRNA] OF 3-119 (ISOFORM 1)</scope>
    <source>
        <strain>cv. Columbia</strain>
    </source>
</reference>
<reference key="5">
    <citation type="journal article" date="2008" name="Plant Physiol. Biochem.">
        <title>Plant pathogenesis-related (PR) proteins: a focus on PR peptides.</title>
        <authorList>
            <person name="Sels J."/>
            <person name="Mathys J."/>
            <person name="De Coninck B.M.A."/>
            <person name="Cammue B.P.A."/>
            <person name="De Bolle M.F.C."/>
        </authorList>
    </citation>
    <scope>GENE FAMILY</scope>
    <scope>NOMENCLATURE</scope>
</reference>
<gene>
    <name type="primary">LTP11</name>
    <name type="ordered locus">At4g33355</name>
    <name type="ORF">F17M5</name>
</gene>
<feature type="signal peptide" evidence="2">
    <location>
        <begin position="1"/>
        <end position="28"/>
    </location>
</feature>
<feature type="chain" id="PRO_0000355618" description="Non-specific lipid-transfer protein 11">
    <location>
        <begin position="29"/>
        <end position="119"/>
    </location>
</feature>
<feature type="disulfide bond" evidence="2">
    <location>
        <begin position="31"/>
        <end position="78"/>
    </location>
</feature>
<feature type="disulfide bond" evidence="2">
    <location>
        <begin position="41"/>
        <end position="55"/>
    </location>
</feature>
<feature type="disulfide bond" evidence="2">
    <location>
        <begin position="56"/>
        <end position="101"/>
    </location>
</feature>
<feature type="disulfide bond" evidence="2">
    <location>
        <begin position="76"/>
        <end position="115"/>
    </location>
</feature>
<feature type="splice variant" id="VSP_035948" description="In isoform 2." evidence="3">
    <original>SIN</original>
    <variation>R</variation>
    <location>
        <begin position="117"/>
        <end position="119"/>
    </location>
</feature>
<keyword id="KW-0025">Alternative splicing</keyword>
<keyword id="KW-1015">Disulfide bond</keyword>
<keyword id="KW-0446">Lipid-binding</keyword>
<keyword id="KW-1185">Reference proteome</keyword>
<keyword id="KW-0732">Signal</keyword>
<keyword id="KW-0813">Transport</keyword>
<protein>
    <recommendedName>
        <fullName>Non-specific lipid-transfer protein 11</fullName>
        <shortName>LTP 11</shortName>
    </recommendedName>
</protein>
<proteinExistence type="inferred from homology"/>
<sequence>MRNITTTTRKMLLLVITILLGIAYHGEAIACPQVNMYLAQCLPYLKAGGNPSPMCCNGLNSLKAAAPEKADRQVACNCLKSVANTIPGINDDFAKQLPAKCGVNIGVPFSKTVDCNSIN</sequence>
<dbReference type="EMBL" id="AL035678">
    <property type="status" value="NOT_ANNOTATED_CDS"/>
    <property type="molecule type" value="Genomic_DNA"/>
</dbReference>
<dbReference type="EMBL" id="AL161583">
    <property type="status" value="NOT_ANNOTATED_CDS"/>
    <property type="molecule type" value="Genomic_DNA"/>
</dbReference>
<dbReference type="EMBL" id="CP002687">
    <property type="protein sequence ID" value="AEE86211.1"/>
    <property type="molecule type" value="Genomic_DNA"/>
</dbReference>
<dbReference type="EMBL" id="CP002687">
    <property type="protein sequence ID" value="AEE86212.1"/>
    <property type="molecule type" value="Genomic_DNA"/>
</dbReference>
<dbReference type="EMBL" id="BT011595">
    <property type="protein sequence ID" value="AAS47601.1"/>
    <property type="molecule type" value="mRNA"/>
</dbReference>
<dbReference type="EMBL" id="BT012236">
    <property type="protein sequence ID" value="AAS76723.1"/>
    <property type="molecule type" value="mRNA"/>
</dbReference>
<dbReference type="EMBL" id="BX829216">
    <property type="status" value="NOT_ANNOTATED_CDS"/>
    <property type="molecule type" value="mRNA"/>
</dbReference>
<dbReference type="RefSeq" id="NP_001031782.1">
    <molecule id="Q2V3C1-2"/>
    <property type="nucleotide sequence ID" value="NM_001036705.4"/>
</dbReference>
<dbReference type="RefSeq" id="NP_680758.3">
    <molecule id="Q2V3C1-1"/>
    <property type="nucleotide sequence ID" value="NM_148392.8"/>
</dbReference>
<dbReference type="SMR" id="Q2V3C1"/>
<dbReference type="FunCoup" id="Q2V3C1">
    <property type="interactions" value="7"/>
</dbReference>
<dbReference type="STRING" id="3702.Q2V3C1"/>
<dbReference type="PaxDb" id="3702-AT4G33355.1"/>
<dbReference type="ProteomicsDB" id="251181">
    <molecule id="Q2V3C1-1"/>
</dbReference>
<dbReference type="EnsemblPlants" id="AT4G33355.1">
    <molecule id="Q2V3C1-1"/>
    <property type="protein sequence ID" value="AT4G33355.1"/>
    <property type="gene ID" value="AT4G33355"/>
</dbReference>
<dbReference type="EnsemblPlants" id="AT4G33355.2">
    <molecule id="Q2V3C1-2"/>
    <property type="protein sequence ID" value="AT4G33355.2"/>
    <property type="gene ID" value="AT4G33355"/>
</dbReference>
<dbReference type="GeneID" id="829472"/>
<dbReference type="Gramene" id="AT4G33355.1">
    <molecule id="Q2V3C1-1"/>
    <property type="protein sequence ID" value="AT4G33355.1"/>
    <property type="gene ID" value="AT4G33355"/>
</dbReference>
<dbReference type="Gramene" id="AT4G33355.2">
    <molecule id="Q2V3C1-2"/>
    <property type="protein sequence ID" value="AT4G33355.2"/>
    <property type="gene ID" value="AT4G33355"/>
</dbReference>
<dbReference type="KEGG" id="ath:AT4G33355"/>
<dbReference type="Araport" id="AT4G33355"/>
<dbReference type="TAIR" id="AT4G33355"/>
<dbReference type="eggNOG" id="ENOG502S1F3">
    <property type="taxonomic scope" value="Eukaryota"/>
</dbReference>
<dbReference type="HOGENOM" id="CLU_128423_2_3_1"/>
<dbReference type="InParanoid" id="Q2V3C1"/>
<dbReference type="OMA" id="ADHYQNI"/>
<dbReference type="PhylomeDB" id="Q2V3C1"/>
<dbReference type="PRO" id="PR:Q2V3C1"/>
<dbReference type="Proteomes" id="UP000006548">
    <property type="component" value="Chromosome 4"/>
</dbReference>
<dbReference type="ExpressionAtlas" id="Q2V3C1">
    <property type="expression patterns" value="baseline and differential"/>
</dbReference>
<dbReference type="GO" id="GO:0008289">
    <property type="term" value="F:lipid binding"/>
    <property type="evidence" value="ECO:0007669"/>
    <property type="project" value="UniProtKB-KW"/>
</dbReference>
<dbReference type="GO" id="GO:0006869">
    <property type="term" value="P:lipid transport"/>
    <property type="evidence" value="ECO:0007669"/>
    <property type="project" value="InterPro"/>
</dbReference>
<dbReference type="CDD" id="cd01960">
    <property type="entry name" value="nsLTP1"/>
    <property type="match status" value="1"/>
</dbReference>
<dbReference type="Gene3D" id="1.10.110.10">
    <property type="entry name" value="Plant lipid-transfer and hydrophobic proteins"/>
    <property type="match status" value="1"/>
</dbReference>
<dbReference type="InterPro" id="IPR036312">
    <property type="entry name" value="Bifun_inhib/LTP/seed_sf"/>
</dbReference>
<dbReference type="InterPro" id="IPR016140">
    <property type="entry name" value="Bifunc_inhib/LTP/seed_store"/>
</dbReference>
<dbReference type="InterPro" id="IPR000528">
    <property type="entry name" value="Plant_nsLTP"/>
</dbReference>
<dbReference type="PANTHER" id="PTHR33076">
    <property type="entry name" value="NON-SPECIFIC LIPID-TRANSFER PROTEIN 2-RELATED"/>
    <property type="match status" value="1"/>
</dbReference>
<dbReference type="Pfam" id="PF00234">
    <property type="entry name" value="Tryp_alpha_amyl"/>
    <property type="match status" value="1"/>
</dbReference>
<dbReference type="PRINTS" id="PR00382">
    <property type="entry name" value="LIPIDTRNSFER"/>
</dbReference>
<dbReference type="SMART" id="SM00499">
    <property type="entry name" value="AAI"/>
    <property type="match status" value="1"/>
</dbReference>
<dbReference type="SUPFAM" id="SSF47699">
    <property type="entry name" value="Bifunctional inhibitor/lipid-transfer protein/seed storage 2S albumin"/>
    <property type="match status" value="1"/>
</dbReference>
<dbReference type="PROSITE" id="PS00597">
    <property type="entry name" value="PLANT_LTP"/>
    <property type="match status" value="1"/>
</dbReference>
<organism>
    <name type="scientific">Arabidopsis thaliana</name>
    <name type="common">Mouse-ear cress</name>
    <dbReference type="NCBI Taxonomy" id="3702"/>
    <lineage>
        <taxon>Eukaryota</taxon>
        <taxon>Viridiplantae</taxon>
        <taxon>Streptophyta</taxon>
        <taxon>Embryophyta</taxon>
        <taxon>Tracheophyta</taxon>
        <taxon>Spermatophyta</taxon>
        <taxon>Magnoliopsida</taxon>
        <taxon>eudicotyledons</taxon>
        <taxon>Gunneridae</taxon>
        <taxon>Pentapetalae</taxon>
        <taxon>rosids</taxon>
        <taxon>malvids</taxon>
        <taxon>Brassicales</taxon>
        <taxon>Brassicaceae</taxon>
        <taxon>Camelineae</taxon>
        <taxon>Arabidopsis</taxon>
    </lineage>
</organism>
<comment type="function">
    <text evidence="1">Plant non-specific lipid-transfer proteins transfer phospholipids as well as galactolipids across membranes. May play a role in wax or cutin deposition in the cell walls of expanding epidermal cells and certain secretory tissues (By similarity).</text>
</comment>
<comment type="alternative products">
    <event type="alternative splicing"/>
    <isoform>
        <id>Q2V3C1-1</id>
        <name>1</name>
        <sequence type="displayed"/>
    </isoform>
    <isoform>
        <id>Q2V3C1-2</id>
        <name>2</name>
        <sequence type="described" ref="VSP_035948"/>
    </isoform>
</comment>
<comment type="similarity">
    <text evidence="4">Belongs to the plant LTP family.</text>
</comment>
<accession>Q2V3C1</accession>
<accession>Q6NLU3</accession>